<name>ZN287_MOUSE</name>
<protein>
    <recommendedName>
        <fullName evidence="5">Zinc finger protein 287</fullName>
        <shortName>Zfp-287</shortName>
    </recommendedName>
    <alternativeName>
        <fullName>Zinc finger protein SKAT-2</fullName>
    </alternativeName>
</protein>
<comment type="function">
    <text>May be involved in transcriptional regulation.</text>
</comment>
<comment type="subcellular location">
    <subcellularLocation>
        <location evidence="5">Nucleus</location>
    </subcellularLocation>
</comment>
<comment type="tissue specificity">
    <text>Expressed in brain and at low levels in kidney and spleen and few hematopoietic cell lines.</text>
</comment>
<comment type="similarity">
    <text evidence="5">Belongs to the krueppel C2H2-type zinc-finger protein family.</text>
</comment>
<dbReference type="EMBL" id="AF281141">
    <property type="protein sequence ID" value="AAG37028.1"/>
    <property type="molecule type" value="mRNA"/>
</dbReference>
<dbReference type="EMBL" id="AK029572">
    <property type="protein sequence ID" value="BAC26519.1"/>
    <property type="molecule type" value="mRNA"/>
</dbReference>
<dbReference type="EMBL" id="BC117876">
    <property type="protein sequence ID" value="AAI17877.1"/>
    <property type="molecule type" value="mRNA"/>
</dbReference>
<dbReference type="CCDS" id="CCDS24830.1"/>
<dbReference type="RefSeq" id="NP_573471.2">
    <property type="nucleotide sequence ID" value="NM_133208.2"/>
</dbReference>
<dbReference type="RefSeq" id="XP_006532443.1">
    <property type="nucleotide sequence ID" value="XM_006532380.2"/>
</dbReference>
<dbReference type="SMR" id="Q9EQB9"/>
<dbReference type="BioGRID" id="228406">
    <property type="interactions" value="52"/>
</dbReference>
<dbReference type="FunCoup" id="Q9EQB9">
    <property type="interactions" value="139"/>
</dbReference>
<dbReference type="STRING" id="10090.ENSMUSP00000141046"/>
<dbReference type="iPTMnet" id="Q9EQB9"/>
<dbReference type="PhosphoSitePlus" id="Q9EQB9"/>
<dbReference type="PaxDb" id="10090-ENSMUSP00000141046"/>
<dbReference type="ProteomicsDB" id="275006"/>
<dbReference type="Antibodypedia" id="25338">
    <property type="antibodies" value="196 antibodies from 29 providers"/>
</dbReference>
<dbReference type="DNASU" id="170740"/>
<dbReference type="Ensembl" id="ENSMUST00000149228.8">
    <property type="protein sequence ID" value="ENSMUSP00000114531.2"/>
    <property type="gene ID" value="ENSMUSG00000005267.14"/>
</dbReference>
<dbReference type="Ensembl" id="ENSMUST00000185656.7">
    <property type="protein sequence ID" value="ENSMUSP00000141046.2"/>
    <property type="gene ID" value="ENSMUSG00000005267.14"/>
</dbReference>
<dbReference type="GeneID" id="170740"/>
<dbReference type="KEGG" id="mmu:170740"/>
<dbReference type="UCSC" id="uc007jju.1">
    <property type="organism name" value="mouse"/>
</dbReference>
<dbReference type="AGR" id="MGI:2176561"/>
<dbReference type="CTD" id="170740"/>
<dbReference type="MGI" id="MGI:2176561">
    <property type="gene designation" value="Zfp287"/>
</dbReference>
<dbReference type="VEuPathDB" id="HostDB:ENSMUSG00000005267"/>
<dbReference type="eggNOG" id="KOG1721">
    <property type="taxonomic scope" value="Eukaryota"/>
</dbReference>
<dbReference type="GeneTree" id="ENSGT00940000162333"/>
<dbReference type="InParanoid" id="Q9EQB9"/>
<dbReference type="OMA" id="KTEAQEC"/>
<dbReference type="OrthoDB" id="9441525at2759"/>
<dbReference type="PhylomeDB" id="Q9EQB9"/>
<dbReference type="BioGRID-ORCS" id="170740">
    <property type="hits" value="2 hits in 76 CRISPR screens"/>
</dbReference>
<dbReference type="ChiTaRS" id="Zfp287">
    <property type="organism name" value="mouse"/>
</dbReference>
<dbReference type="PRO" id="PR:Q9EQB9"/>
<dbReference type="Proteomes" id="UP000000589">
    <property type="component" value="Chromosome 11"/>
</dbReference>
<dbReference type="RNAct" id="Q9EQB9">
    <property type="molecule type" value="protein"/>
</dbReference>
<dbReference type="Bgee" id="ENSMUSG00000005267">
    <property type="expression patterns" value="Expressed in rostral migratory stream and 198 other cell types or tissues"/>
</dbReference>
<dbReference type="ExpressionAtlas" id="Q9EQB9">
    <property type="expression patterns" value="baseline and differential"/>
</dbReference>
<dbReference type="GO" id="GO:0005634">
    <property type="term" value="C:nucleus"/>
    <property type="evidence" value="ECO:0007669"/>
    <property type="project" value="UniProtKB-SubCell"/>
</dbReference>
<dbReference type="GO" id="GO:0003677">
    <property type="term" value="F:DNA binding"/>
    <property type="evidence" value="ECO:0007669"/>
    <property type="project" value="UniProtKB-KW"/>
</dbReference>
<dbReference type="GO" id="GO:0008270">
    <property type="term" value="F:zinc ion binding"/>
    <property type="evidence" value="ECO:0007669"/>
    <property type="project" value="UniProtKB-KW"/>
</dbReference>
<dbReference type="GO" id="GO:0045893">
    <property type="term" value="P:positive regulation of DNA-templated transcription"/>
    <property type="evidence" value="ECO:0000314"/>
    <property type="project" value="MGI"/>
</dbReference>
<dbReference type="GO" id="GO:0001817">
    <property type="term" value="P:regulation of cytokine production"/>
    <property type="evidence" value="ECO:0000314"/>
    <property type="project" value="MGI"/>
</dbReference>
<dbReference type="CDD" id="cd07765">
    <property type="entry name" value="KRAB_A-box"/>
    <property type="match status" value="1"/>
</dbReference>
<dbReference type="CDD" id="cd07936">
    <property type="entry name" value="SCAN"/>
    <property type="match status" value="1"/>
</dbReference>
<dbReference type="FunFam" id="3.30.160.60:FF:000446">
    <property type="entry name" value="Zinc finger protein"/>
    <property type="match status" value="1"/>
</dbReference>
<dbReference type="FunFam" id="1.10.4020.10:FF:000001">
    <property type="entry name" value="zinc finger protein 263 isoform X1"/>
    <property type="match status" value="1"/>
</dbReference>
<dbReference type="FunFam" id="3.30.160.60:FF:000252">
    <property type="entry name" value="Zinc finger protein 287"/>
    <property type="match status" value="2"/>
</dbReference>
<dbReference type="FunFam" id="3.30.160.60:FF:000269">
    <property type="entry name" value="Zinc finger protein 287"/>
    <property type="match status" value="2"/>
</dbReference>
<dbReference type="FunFam" id="3.30.160.60:FF:000479">
    <property type="entry name" value="Zinc finger protein 287"/>
    <property type="match status" value="1"/>
</dbReference>
<dbReference type="FunFam" id="3.30.160.60:FF:001178">
    <property type="entry name" value="zinc finger protein 287"/>
    <property type="match status" value="1"/>
</dbReference>
<dbReference type="FunFam" id="3.30.160.60:FF:000352">
    <property type="entry name" value="zinc finger protein 3 homolog"/>
    <property type="match status" value="1"/>
</dbReference>
<dbReference type="FunFam" id="3.30.160.60:FF:002343">
    <property type="entry name" value="Zinc finger protein 33A"/>
    <property type="match status" value="1"/>
</dbReference>
<dbReference type="FunFam" id="3.30.160.60:FF:001498">
    <property type="entry name" value="Zinc finger protein 404"/>
    <property type="match status" value="2"/>
</dbReference>
<dbReference type="FunFam" id="3.30.160.60:FF:002090">
    <property type="entry name" value="Zinc finger protein 473"/>
    <property type="match status" value="1"/>
</dbReference>
<dbReference type="FunFam" id="3.30.160.60:FF:001532">
    <property type="entry name" value="Zinc finger protein 483"/>
    <property type="match status" value="1"/>
</dbReference>
<dbReference type="FunFam" id="3.30.160.60:FF:000009">
    <property type="entry name" value="zinc finger protein 79 isoform X2"/>
    <property type="match status" value="1"/>
</dbReference>
<dbReference type="Gene3D" id="6.10.140.140">
    <property type="match status" value="1"/>
</dbReference>
<dbReference type="Gene3D" id="3.30.160.60">
    <property type="entry name" value="Classic Zinc Finger"/>
    <property type="match status" value="14"/>
</dbReference>
<dbReference type="Gene3D" id="1.10.4020.10">
    <property type="entry name" value="DNA breaking-rejoining enzymes"/>
    <property type="match status" value="1"/>
</dbReference>
<dbReference type="InterPro" id="IPR001909">
    <property type="entry name" value="KRAB"/>
</dbReference>
<dbReference type="InterPro" id="IPR036051">
    <property type="entry name" value="KRAB_dom_sf"/>
</dbReference>
<dbReference type="InterPro" id="IPR003309">
    <property type="entry name" value="SCAN_dom"/>
</dbReference>
<dbReference type="InterPro" id="IPR038269">
    <property type="entry name" value="SCAN_sf"/>
</dbReference>
<dbReference type="InterPro" id="IPR050758">
    <property type="entry name" value="Znf_C2H2-type"/>
</dbReference>
<dbReference type="InterPro" id="IPR036236">
    <property type="entry name" value="Znf_C2H2_sf"/>
</dbReference>
<dbReference type="InterPro" id="IPR013087">
    <property type="entry name" value="Znf_C2H2_type"/>
</dbReference>
<dbReference type="PANTHER" id="PTHR23234:SF8">
    <property type="entry name" value="C2H2-TYPE DOMAIN-CONTAINING PROTEIN"/>
    <property type="match status" value="1"/>
</dbReference>
<dbReference type="PANTHER" id="PTHR23234">
    <property type="entry name" value="ZNF44 PROTEIN"/>
    <property type="match status" value="1"/>
</dbReference>
<dbReference type="Pfam" id="PF01352">
    <property type="entry name" value="KRAB"/>
    <property type="match status" value="1"/>
</dbReference>
<dbReference type="Pfam" id="PF02023">
    <property type="entry name" value="SCAN"/>
    <property type="match status" value="1"/>
</dbReference>
<dbReference type="Pfam" id="PF00096">
    <property type="entry name" value="zf-C2H2"/>
    <property type="match status" value="13"/>
</dbReference>
<dbReference type="Pfam" id="PF13912">
    <property type="entry name" value="zf-C2H2_6"/>
    <property type="match status" value="1"/>
</dbReference>
<dbReference type="SMART" id="SM00349">
    <property type="entry name" value="KRAB"/>
    <property type="match status" value="1"/>
</dbReference>
<dbReference type="SMART" id="SM00431">
    <property type="entry name" value="SCAN"/>
    <property type="match status" value="1"/>
</dbReference>
<dbReference type="SMART" id="SM00355">
    <property type="entry name" value="ZnF_C2H2"/>
    <property type="match status" value="14"/>
</dbReference>
<dbReference type="SUPFAM" id="SSF57667">
    <property type="entry name" value="beta-beta-alpha zinc fingers"/>
    <property type="match status" value="8"/>
</dbReference>
<dbReference type="SUPFAM" id="SSF109640">
    <property type="entry name" value="KRAB domain (Kruppel-associated box)"/>
    <property type="match status" value="1"/>
</dbReference>
<dbReference type="SUPFAM" id="SSF47353">
    <property type="entry name" value="Retrovirus capsid dimerization domain-like"/>
    <property type="match status" value="1"/>
</dbReference>
<dbReference type="PROSITE" id="PS50805">
    <property type="entry name" value="KRAB"/>
    <property type="match status" value="1"/>
</dbReference>
<dbReference type="PROSITE" id="PS50804">
    <property type="entry name" value="SCAN_BOX"/>
    <property type="match status" value="1"/>
</dbReference>
<dbReference type="PROSITE" id="PS00028">
    <property type="entry name" value="ZINC_FINGER_C2H2_1"/>
    <property type="match status" value="14"/>
</dbReference>
<dbReference type="PROSITE" id="PS50157">
    <property type="entry name" value="ZINC_FINGER_C2H2_2"/>
    <property type="match status" value="14"/>
</dbReference>
<gene>
    <name evidence="6" type="primary">Znf287</name>
    <name type="synonym">Skat2</name>
    <name type="synonym">Zfp287</name>
</gene>
<feature type="chain" id="PRO_0000047512" description="Zinc finger protein 287">
    <location>
        <begin position="1"/>
        <end position="759"/>
    </location>
</feature>
<feature type="domain" description="SCAN box" evidence="3">
    <location>
        <begin position="42"/>
        <end position="124"/>
    </location>
</feature>
<feature type="domain" description="KRAB" evidence="2">
    <location>
        <begin position="166"/>
        <end position="234"/>
    </location>
</feature>
<feature type="zinc finger region" description="C2H2-type 1" evidence="1">
    <location>
        <begin position="366"/>
        <end position="388"/>
    </location>
</feature>
<feature type="zinc finger region" description="C2H2-type 2" evidence="1">
    <location>
        <begin position="394"/>
        <end position="416"/>
    </location>
</feature>
<feature type="zinc finger region" description="C2H2-type 3" evidence="1">
    <location>
        <begin position="422"/>
        <end position="444"/>
    </location>
</feature>
<feature type="zinc finger region" description="C2H2-type 4" evidence="1">
    <location>
        <begin position="450"/>
        <end position="472"/>
    </location>
</feature>
<feature type="zinc finger region" description="C2H2-type 5" evidence="1">
    <location>
        <begin position="478"/>
        <end position="500"/>
    </location>
</feature>
<feature type="zinc finger region" description="C2H2-type 6" evidence="1">
    <location>
        <begin position="506"/>
        <end position="528"/>
    </location>
</feature>
<feature type="zinc finger region" description="C2H2-type 7" evidence="1">
    <location>
        <begin position="534"/>
        <end position="556"/>
    </location>
</feature>
<feature type="zinc finger region" description="C2H2-type 8" evidence="1">
    <location>
        <begin position="562"/>
        <end position="584"/>
    </location>
</feature>
<feature type="zinc finger region" description="C2H2-type 9" evidence="1">
    <location>
        <begin position="590"/>
        <end position="612"/>
    </location>
</feature>
<feature type="zinc finger region" description="C2H2-type 10" evidence="1">
    <location>
        <begin position="618"/>
        <end position="640"/>
    </location>
</feature>
<feature type="zinc finger region" description="C2H2-type 11" evidence="1">
    <location>
        <begin position="646"/>
        <end position="668"/>
    </location>
</feature>
<feature type="zinc finger region" description="C2H2-type 12" evidence="1">
    <location>
        <begin position="674"/>
        <end position="696"/>
    </location>
</feature>
<feature type="zinc finger region" description="C2H2-type 13" evidence="1">
    <location>
        <begin position="702"/>
        <end position="724"/>
    </location>
</feature>
<feature type="zinc finger region" description="C2H2-type 14" evidence="1">
    <location>
        <begin position="730"/>
        <end position="752"/>
    </location>
</feature>
<feature type="region of interest" description="Disordered" evidence="4">
    <location>
        <begin position="127"/>
        <end position="154"/>
    </location>
</feature>
<feature type="sequence conflict" description="In Ref. 1; AAG37028." evidence="5" ref="1">
    <original>Q</original>
    <variation>R</variation>
    <location>
        <position position="28"/>
    </location>
</feature>
<feature type="sequence conflict" description="In Ref. 1; AAG37028." evidence="5" ref="1">
    <original>E</original>
    <variation>G</variation>
    <location>
        <position position="235"/>
    </location>
</feature>
<feature type="sequence conflict" description="In Ref. 1; AAG37028." evidence="5" ref="1">
    <original>Y</original>
    <variation>H</variation>
    <location>
        <position position="339"/>
    </location>
</feature>
<feature type="sequence conflict" description="In Ref. 1; AAG37028." evidence="5" ref="1">
    <original>K</original>
    <variation>R</variation>
    <location>
        <position position="672"/>
    </location>
</feature>
<feature type="sequence conflict" description="In Ref. 1; AAG37028." evidence="5" ref="1">
    <original>G</original>
    <variation>E</variation>
    <location>
        <position position="736"/>
    </location>
</feature>
<sequence>MANSSLSQVLLMWKPGKIQKGPCSAEQQTLTSRLLRDTETCRRNFRNFPYPDVAGPRKALCQLRELCLKWLRPEVHSKEQILELLVLEQFLSILPGEVRTWVNSQYPESSEEVVALVEDLTQILEEEEAPQSSALPQDTPEDDPNHDPNPASQAGWLSDVVTKDLVTFNDVAVDITQEDWELMPPVQKELYKTVTLQNYWNMVSLGLTVYRPTVIPVLEEPWMVIKEIVEGPNPEWEPKAQAQCPAKHLPELKQDGTQTVKLEDSYDDDNDDSVESPPVCAFGMIHIDEEGFSVKSELSQEDPTEEYLSKCDIYRVTFEKHTNLGVQFDTQSDDKTALYNESKPPFSNASSGGAVRGKILPGDKPYSCNVCGKQFRKYPSLLAHRENHAKEKAYECEECGKEFKHLSSLIAHQRMHTGEKPYECHQCGKAFSQRAHLTIHQRIHTGEKPYKCEDCGKDFSQRAHLTIHQRTHTGEKPYKCLECSKTFSHSSSLINHQRVHTGEKPYICNECGKTFSQSTHLLQHQKIHTGKKPYKCNECWKVFSQSTYLIRHQRIHSGEKCYKCTACGKAFAHSSTLIQHQTTHTGEKSYICNVCGKAFSQSANLTQHHRTHTGEKPYKCSVCGKAFSQSVHLTQHQRIHNGEKPFKCNTCGKAYRQGANLTQHQRVHTGEKPYKCHHCGKAFIYSSSLNQHRRTHTGERPYKCSHCNKDFSQRTCLIQHQRIHTGEKPYGCRICGKAFTQSTNLIQHQRVHTGARHRN</sequence>
<proteinExistence type="evidence at transcript level"/>
<reference key="1">
    <citation type="journal article" date="2000" name="Eur. J. Immunol.">
        <title>Identification and characterization of SKAT-2, a novel Th2-specific zinc finger gene.</title>
        <authorList>
            <person name="Blanchard A.D."/>
            <person name="Page K.R."/>
            <person name="Watkin H."/>
            <person name="Hayward P."/>
            <person name="Wong T."/>
            <person name="Bartholomew M."/>
            <person name="Quint D.J."/>
            <person name="Daly M."/>
            <person name="Garcia-Lopez J."/>
            <person name="Champion B.R."/>
        </authorList>
    </citation>
    <scope>NUCLEOTIDE SEQUENCE [MRNA]</scope>
    <source>
        <strain>D0.11.10</strain>
    </source>
</reference>
<reference key="2">
    <citation type="journal article" date="2005" name="Science">
        <title>The transcriptional landscape of the mammalian genome.</title>
        <authorList>
            <person name="Carninci P."/>
            <person name="Kasukawa T."/>
            <person name="Katayama S."/>
            <person name="Gough J."/>
            <person name="Frith M.C."/>
            <person name="Maeda N."/>
            <person name="Oyama R."/>
            <person name="Ravasi T."/>
            <person name="Lenhard B."/>
            <person name="Wells C."/>
            <person name="Kodzius R."/>
            <person name="Shimokawa K."/>
            <person name="Bajic V.B."/>
            <person name="Brenner S.E."/>
            <person name="Batalov S."/>
            <person name="Forrest A.R."/>
            <person name="Zavolan M."/>
            <person name="Davis M.J."/>
            <person name="Wilming L.G."/>
            <person name="Aidinis V."/>
            <person name="Allen J.E."/>
            <person name="Ambesi-Impiombato A."/>
            <person name="Apweiler R."/>
            <person name="Aturaliya R.N."/>
            <person name="Bailey T.L."/>
            <person name="Bansal M."/>
            <person name="Baxter L."/>
            <person name="Beisel K.W."/>
            <person name="Bersano T."/>
            <person name="Bono H."/>
            <person name="Chalk A.M."/>
            <person name="Chiu K.P."/>
            <person name="Choudhary V."/>
            <person name="Christoffels A."/>
            <person name="Clutterbuck D.R."/>
            <person name="Crowe M.L."/>
            <person name="Dalla E."/>
            <person name="Dalrymple B.P."/>
            <person name="de Bono B."/>
            <person name="Della Gatta G."/>
            <person name="di Bernardo D."/>
            <person name="Down T."/>
            <person name="Engstrom P."/>
            <person name="Fagiolini M."/>
            <person name="Faulkner G."/>
            <person name="Fletcher C.F."/>
            <person name="Fukushima T."/>
            <person name="Furuno M."/>
            <person name="Futaki S."/>
            <person name="Gariboldi M."/>
            <person name="Georgii-Hemming P."/>
            <person name="Gingeras T.R."/>
            <person name="Gojobori T."/>
            <person name="Green R.E."/>
            <person name="Gustincich S."/>
            <person name="Harbers M."/>
            <person name="Hayashi Y."/>
            <person name="Hensch T.K."/>
            <person name="Hirokawa N."/>
            <person name="Hill D."/>
            <person name="Huminiecki L."/>
            <person name="Iacono M."/>
            <person name="Ikeo K."/>
            <person name="Iwama A."/>
            <person name="Ishikawa T."/>
            <person name="Jakt M."/>
            <person name="Kanapin A."/>
            <person name="Katoh M."/>
            <person name="Kawasawa Y."/>
            <person name="Kelso J."/>
            <person name="Kitamura H."/>
            <person name="Kitano H."/>
            <person name="Kollias G."/>
            <person name="Krishnan S.P."/>
            <person name="Kruger A."/>
            <person name="Kummerfeld S.K."/>
            <person name="Kurochkin I.V."/>
            <person name="Lareau L.F."/>
            <person name="Lazarevic D."/>
            <person name="Lipovich L."/>
            <person name="Liu J."/>
            <person name="Liuni S."/>
            <person name="McWilliam S."/>
            <person name="Madan Babu M."/>
            <person name="Madera M."/>
            <person name="Marchionni L."/>
            <person name="Matsuda H."/>
            <person name="Matsuzawa S."/>
            <person name="Miki H."/>
            <person name="Mignone F."/>
            <person name="Miyake S."/>
            <person name="Morris K."/>
            <person name="Mottagui-Tabar S."/>
            <person name="Mulder N."/>
            <person name="Nakano N."/>
            <person name="Nakauchi H."/>
            <person name="Ng P."/>
            <person name="Nilsson R."/>
            <person name="Nishiguchi S."/>
            <person name="Nishikawa S."/>
            <person name="Nori F."/>
            <person name="Ohara O."/>
            <person name="Okazaki Y."/>
            <person name="Orlando V."/>
            <person name="Pang K.C."/>
            <person name="Pavan W.J."/>
            <person name="Pavesi G."/>
            <person name="Pesole G."/>
            <person name="Petrovsky N."/>
            <person name="Piazza S."/>
            <person name="Reed J."/>
            <person name="Reid J.F."/>
            <person name="Ring B.Z."/>
            <person name="Ringwald M."/>
            <person name="Rost B."/>
            <person name="Ruan Y."/>
            <person name="Salzberg S.L."/>
            <person name="Sandelin A."/>
            <person name="Schneider C."/>
            <person name="Schoenbach C."/>
            <person name="Sekiguchi K."/>
            <person name="Semple C.A."/>
            <person name="Seno S."/>
            <person name="Sessa L."/>
            <person name="Sheng Y."/>
            <person name="Shibata Y."/>
            <person name="Shimada H."/>
            <person name="Shimada K."/>
            <person name="Silva D."/>
            <person name="Sinclair B."/>
            <person name="Sperling S."/>
            <person name="Stupka E."/>
            <person name="Sugiura K."/>
            <person name="Sultana R."/>
            <person name="Takenaka Y."/>
            <person name="Taki K."/>
            <person name="Tammoja K."/>
            <person name="Tan S.L."/>
            <person name="Tang S."/>
            <person name="Taylor M.S."/>
            <person name="Tegner J."/>
            <person name="Teichmann S.A."/>
            <person name="Ueda H.R."/>
            <person name="van Nimwegen E."/>
            <person name="Verardo R."/>
            <person name="Wei C.L."/>
            <person name="Yagi K."/>
            <person name="Yamanishi H."/>
            <person name="Zabarovsky E."/>
            <person name="Zhu S."/>
            <person name="Zimmer A."/>
            <person name="Hide W."/>
            <person name="Bult C."/>
            <person name="Grimmond S.M."/>
            <person name="Teasdale R.D."/>
            <person name="Liu E.T."/>
            <person name="Brusic V."/>
            <person name="Quackenbush J."/>
            <person name="Wahlestedt C."/>
            <person name="Mattick J.S."/>
            <person name="Hume D.A."/>
            <person name="Kai C."/>
            <person name="Sasaki D."/>
            <person name="Tomaru Y."/>
            <person name="Fukuda S."/>
            <person name="Kanamori-Katayama M."/>
            <person name="Suzuki M."/>
            <person name="Aoki J."/>
            <person name="Arakawa T."/>
            <person name="Iida J."/>
            <person name="Imamura K."/>
            <person name="Itoh M."/>
            <person name="Kato T."/>
            <person name="Kawaji H."/>
            <person name="Kawagashira N."/>
            <person name="Kawashima T."/>
            <person name="Kojima M."/>
            <person name="Kondo S."/>
            <person name="Konno H."/>
            <person name="Nakano K."/>
            <person name="Ninomiya N."/>
            <person name="Nishio T."/>
            <person name="Okada M."/>
            <person name="Plessy C."/>
            <person name="Shibata K."/>
            <person name="Shiraki T."/>
            <person name="Suzuki S."/>
            <person name="Tagami M."/>
            <person name="Waki K."/>
            <person name="Watahiki A."/>
            <person name="Okamura-Oho Y."/>
            <person name="Suzuki H."/>
            <person name="Kawai J."/>
            <person name="Hayashizaki Y."/>
        </authorList>
    </citation>
    <scope>NUCLEOTIDE SEQUENCE [LARGE SCALE MRNA]</scope>
    <source>
        <strain>C57BL/6J</strain>
        <tissue>Testis</tissue>
    </source>
</reference>
<reference key="3">
    <citation type="journal article" date="2004" name="Genome Res.">
        <title>The status, quality, and expansion of the NIH full-length cDNA project: the Mammalian Gene Collection (MGC).</title>
        <authorList>
            <consortium name="The MGC Project Team"/>
        </authorList>
    </citation>
    <scope>NUCLEOTIDE SEQUENCE [LARGE SCALE MRNA]</scope>
</reference>
<organism>
    <name type="scientific">Mus musculus</name>
    <name type="common">Mouse</name>
    <dbReference type="NCBI Taxonomy" id="10090"/>
    <lineage>
        <taxon>Eukaryota</taxon>
        <taxon>Metazoa</taxon>
        <taxon>Chordata</taxon>
        <taxon>Craniata</taxon>
        <taxon>Vertebrata</taxon>
        <taxon>Euteleostomi</taxon>
        <taxon>Mammalia</taxon>
        <taxon>Eutheria</taxon>
        <taxon>Euarchontoglires</taxon>
        <taxon>Glires</taxon>
        <taxon>Rodentia</taxon>
        <taxon>Myomorpha</taxon>
        <taxon>Muroidea</taxon>
        <taxon>Muridae</taxon>
        <taxon>Murinae</taxon>
        <taxon>Mus</taxon>
        <taxon>Mus</taxon>
    </lineage>
</organism>
<evidence type="ECO:0000255" key="1">
    <source>
        <dbReference type="PROSITE-ProRule" id="PRU00042"/>
    </source>
</evidence>
<evidence type="ECO:0000255" key="2">
    <source>
        <dbReference type="PROSITE-ProRule" id="PRU00119"/>
    </source>
</evidence>
<evidence type="ECO:0000255" key="3">
    <source>
        <dbReference type="PROSITE-ProRule" id="PRU00187"/>
    </source>
</evidence>
<evidence type="ECO:0000256" key="4">
    <source>
        <dbReference type="SAM" id="MobiDB-lite"/>
    </source>
</evidence>
<evidence type="ECO:0000305" key="5"/>
<evidence type="ECO:0000312" key="6">
    <source>
        <dbReference type="MGI" id="MGI:2176561"/>
    </source>
</evidence>
<keyword id="KW-0238">DNA-binding</keyword>
<keyword id="KW-0479">Metal-binding</keyword>
<keyword id="KW-0539">Nucleus</keyword>
<keyword id="KW-1185">Reference proteome</keyword>
<keyword id="KW-0677">Repeat</keyword>
<keyword id="KW-0804">Transcription</keyword>
<keyword id="KW-0805">Transcription regulation</keyword>
<keyword id="KW-0862">Zinc</keyword>
<keyword id="KW-0863">Zinc-finger</keyword>
<accession>Q9EQB9</accession>
<accession>Q8CDU3</accession>